<keyword id="KW-0963">Cytoplasm</keyword>
<keyword id="KW-0671">Queuosine biosynthesis</keyword>
<keyword id="KW-1185">Reference proteome</keyword>
<keyword id="KW-0949">S-adenosyl-L-methionine</keyword>
<keyword id="KW-0808">Transferase</keyword>
<organism>
    <name type="scientific">Shewanella loihica (strain ATCC BAA-1088 / PV-4)</name>
    <dbReference type="NCBI Taxonomy" id="323850"/>
    <lineage>
        <taxon>Bacteria</taxon>
        <taxon>Pseudomonadati</taxon>
        <taxon>Pseudomonadota</taxon>
        <taxon>Gammaproteobacteria</taxon>
        <taxon>Alteromonadales</taxon>
        <taxon>Shewanellaceae</taxon>
        <taxon>Shewanella</taxon>
    </lineage>
</organism>
<accession>A3QFF6</accession>
<name>QUEA_SHELP</name>
<comment type="function">
    <text evidence="1">Transfers and isomerizes the ribose moiety from AdoMet to the 7-aminomethyl group of 7-deazaguanine (preQ1-tRNA) to give epoxyqueuosine (oQ-tRNA).</text>
</comment>
<comment type="catalytic activity">
    <reaction evidence="1">
        <text>7-aminomethyl-7-carbaguanosine(34) in tRNA + S-adenosyl-L-methionine = epoxyqueuosine(34) in tRNA + adenine + L-methionine + 2 H(+)</text>
        <dbReference type="Rhea" id="RHEA:32155"/>
        <dbReference type="Rhea" id="RHEA-COMP:10342"/>
        <dbReference type="Rhea" id="RHEA-COMP:18582"/>
        <dbReference type="ChEBI" id="CHEBI:15378"/>
        <dbReference type="ChEBI" id="CHEBI:16708"/>
        <dbReference type="ChEBI" id="CHEBI:57844"/>
        <dbReference type="ChEBI" id="CHEBI:59789"/>
        <dbReference type="ChEBI" id="CHEBI:82833"/>
        <dbReference type="ChEBI" id="CHEBI:194443"/>
        <dbReference type="EC" id="2.4.99.17"/>
    </reaction>
</comment>
<comment type="pathway">
    <text evidence="1">tRNA modification; tRNA-queuosine biosynthesis.</text>
</comment>
<comment type="subunit">
    <text evidence="1">Monomer.</text>
</comment>
<comment type="subcellular location">
    <subcellularLocation>
        <location evidence="1">Cytoplasm</location>
    </subcellularLocation>
</comment>
<comment type="similarity">
    <text evidence="1">Belongs to the QueA family.</text>
</comment>
<proteinExistence type="inferred from homology"/>
<sequence>MRVADFSFDLPDELIARYPMPNRTASRLLTLDGNSGAVADKQFTDILEMVNPGDLMVFNNTRVIPARVFGQKQTGGKLEILVERMLDDKRILAHVRSSKSPKPGTIICLDGGYEMTMLARHDTLFELELNSESTILEVLEEVGHMPLPPYIDRPDEDADKERYQTVYNQNPGAVAAPTAGLHFDDALLAALKEKGVNVAFVTLHVGAGTFQPVRVDSILDHKMHSEWAEVPQDVVDSIKATKAAGNRVIAVGTTSVRSLESAAKASEGELQAYSNDTDIFIYPGYEFQVVDAMVTNFHLPESTLIMLISAFAGFDEVKNAYQHAIAQKYRFFSYGDAMFVTKKAI</sequence>
<feature type="chain" id="PRO_1000015272" description="S-adenosylmethionine:tRNA ribosyltransferase-isomerase">
    <location>
        <begin position="1"/>
        <end position="345"/>
    </location>
</feature>
<dbReference type="EC" id="2.4.99.17" evidence="1"/>
<dbReference type="EMBL" id="CP000606">
    <property type="protein sequence ID" value="ABO24204.1"/>
    <property type="molecule type" value="Genomic_DNA"/>
</dbReference>
<dbReference type="RefSeq" id="WP_011866135.1">
    <property type="nucleotide sequence ID" value="NC_009092.1"/>
</dbReference>
<dbReference type="SMR" id="A3QFF6"/>
<dbReference type="STRING" id="323850.Shew_2338"/>
<dbReference type="KEGG" id="slo:Shew_2338"/>
<dbReference type="eggNOG" id="COG0809">
    <property type="taxonomic scope" value="Bacteria"/>
</dbReference>
<dbReference type="HOGENOM" id="CLU_039110_1_0_6"/>
<dbReference type="OrthoDB" id="9805933at2"/>
<dbReference type="UniPathway" id="UPA00392"/>
<dbReference type="Proteomes" id="UP000001558">
    <property type="component" value="Chromosome"/>
</dbReference>
<dbReference type="GO" id="GO:0005737">
    <property type="term" value="C:cytoplasm"/>
    <property type="evidence" value="ECO:0007669"/>
    <property type="project" value="UniProtKB-SubCell"/>
</dbReference>
<dbReference type="GO" id="GO:0051075">
    <property type="term" value="F:S-adenosylmethionine:tRNA ribosyltransferase-isomerase activity"/>
    <property type="evidence" value="ECO:0007669"/>
    <property type="project" value="UniProtKB-EC"/>
</dbReference>
<dbReference type="GO" id="GO:0008616">
    <property type="term" value="P:queuosine biosynthetic process"/>
    <property type="evidence" value="ECO:0007669"/>
    <property type="project" value="UniProtKB-UniRule"/>
</dbReference>
<dbReference type="GO" id="GO:0002099">
    <property type="term" value="P:tRNA wobble guanine modification"/>
    <property type="evidence" value="ECO:0007669"/>
    <property type="project" value="TreeGrafter"/>
</dbReference>
<dbReference type="FunFam" id="2.40.10.240:FF:000001">
    <property type="entry name" value="S-adenosylmethionine:tRNA ribosyltransferase-isomerase"/>
    <property type="match status" value="1"/>
</dbReference>
<dbReference type="FunFam" id="3.40.1780.10:FF:000001">
    <property type="entry name" value="S-adenosylmethionine:tRNA ribosyltransferase-isomerase"/>
    <property type="match status" value="1"/>
</dbReference>
<dbReference type="Gene3D" id="2.40.10.240">
    <property type="entry name" value="QueA-like"/>
    <property type="match status" value="1"/>
</dbReference>
<dbReference type="Gene3D" id="3.40.1780.10">
    <property type="entry name" value="QueA-like"/>
    <property type="match status" value="1"/>
</dbReference>
<dbReference type="HAMAP" id="MF_00113">
    <property type="entry name" value="QueA"/>
    <property type="match status" value="1"/>
</dbReference>
<dbReference type="InterPro" id="IPR003699">
    <property type="entry name" value="QueA"/>
</dbReference>
<dbReference type="InterPro" id="IPR042118">
    <property type="entry name" value="QueA_dom1"/>
</dbReference>
<dbReference type="InterPro" id="IPR042119">
    <property type="entry name" value="QueA_dom2"/>
</dbReference>
<dbReference type="InterPro" id="IPR036100">
    <property type="entry name" value="QueA_sf"/>
</dbReference>
<dbReference type="NCBIfam" id="NF001140">
    <property type="entry name" value="PRK00147.1"/>
    <property type="match status" value="1"/>
</dbReference>
<dbReference type="NCBIfam" id="TIGR00113">
    <property type="entry name" value="queA"/>
    <property type="match status" value="1"/>
</dbReference>
<dbReference type="PANTHER" id="PTHR30307">
    <property type="entry name" value="S-ADENOSYLMETHIONINE:TRNA RIBOSYLTRANSFERASE-ISOMERASE"/>
    <property type="match status" value="1"/>
</dbReference>
<dbReference type="PANTHER" id="PTHR30307:SF0">
    <property type="entry name" value="S-ADENOSYLMETHIONINE:TRNA RIBOSYLTRANSFERASE-ISOMERASE"/>
    <property type="match status" value="1"/>
</dbReference>
<dbReference type="Pfam" id="PF02547">
    <property type="entry name" value="Queuosine_synth"/>
    <property type="match status" value="1"/>
</dbReference>
<dbReference type="SUPFAM" id="SSF111337">
    <property type="entry name" value="QueA-like"/>
    <property type="match status" value="1"/>
</dbReference>
<protein>
    <recommendedName>
        <fullName evidence="1">S-adenosylmethionine:tRNA ribosyltransferase-isomerase</fullName>
        <ecNumber evidence="1">2.4.99.17</ecNumber>
    </recommendedName>
    <alternativeName>
        <fullName evidence="1">Queuosine biosynthesis protein QueA</fullName>
    </alternativeName>
</protein>
<evidence type="ECO:0000255" key="1">
    <source>
        <dbReference type="HAMAP-Rule" id="MF_00113"/>
    </source>
</evidence>
<gene>
    <name evidence="1" type="primary">queA</name>
    <name type="ordered locus">Shew_2338</name>
</gene>
<reference key="1">
    <citation type="submission" date="2007-03" db="EMBL/GenBank/DDBJ databases">
        <title>Complete sequence of Shewanella loihica PV-4.</title>
        <authorList>
            <consortium name="US DOE Joint Genome Institute"/>
            <person name="Copeland A."/>
            <person name="Lucas S."/>
            <person name="Lapidus A."/>
            <person name="Barry K."/>
            <person name="Detter J.C."/>
            <person name="Glavina del Rio T."/>
            <person name="Hammon N."/>
            <person name="Israni S."/>
            <person name="Dalin E."/>
            <person name="Tice H."/>
            <person name="Pitluck S."/>
            <person name="Chain P."/>
            <person name="Malfatti S."/>
            <person name="Shin M."/>
            <person name="Vergez L."/>
            <person name="Schmutz J."/>
            <person name="Larimer F."/>
            <person name="Land M."/>
            <person name="Hauser L."/>
            <person name="Kyrpides N."/>
            <person name="Mikhailova N."/>
            <person name="Romine M.F."/>
            <person name="Serres G."/>
            <person name="Fredrickson J."/>
            <person name="Tiedje J."/>
            <person name="Richardson P."/>
        </authorList>
    </citation>
    <scope>NUCLEOTIDE SEQUENCE [LARGE SCALE GENOMIC DNA]</scope>
    <source>
        <strain>ATCC BAA-1088 / PV-4</strain>
    </source>
</reference>